<dbReference type="EC" id="4.2.1.96" evidence="1"/>
<dbReference type="EMBL" id="AL954747">
    <property type="protein sequence ID" value="CAD83988.1"/>
    <property type="molecule type" value="Genomic_DNA"/>
</dbReference>
<dbReference type="RefSeq" id="WP_011110729.1">
    <property type="nucleotide sequence ID" value="NC_004757.1"/>
</dbReference>
<dbReference type="SMR" id="Q82Y13"/>
<dbReference type="STRING" id="228410.NE0077"/>
<dbReference type="GeneID" id="87103291"/>
<dbReference type="KEGG" id="neu:NE0077"/>
<dbReference type="eggNOG" id="COG2154">
    <property type="taxonomic scope" value="Bacteria"/>
</dbReference>
<dbReference type="HOGENOM" id="CLU_081974_2_2_4"/>
<dbReference type="OrthoDB" id="9794987at2"/>
<dbReference type="PhylomeDB" id="Q82Y13"/>
<dbReference type="Proteomes" id="UP000001416">
    <property type="component" value="Chromosome"/>
</dbReference>
<dbReference type="GO" id="GO:0008124">
    <property type="term" value="F:4-alpha-hydroxytetrahydrobiopterin dehydratase activity"/>
    <property type="evidence" value="ECO:0007669"/>
    <property type="project" value="UniProtKB-UniRule"/>
</dbReference>
<dbReference type="GO" id="GO:0006729">
    <property type="term" value="P:tetrahydrobiopterin biosynthetic process"/>
    <property type="evidence" value="ECO:0007669"/>
    <property type="project" value="InterPro"/>
</dbReference>
<dbReference type="CDD" id="cd00913">
    <property type="entry name" value="PCD_DCoH_subfamily_a"/>
    <property type="match status" value="1"/>
</dbReference>
<dbReference type="Gene3D" id="3.30.1360.20">
    <property type="entry name" value="Transcriptional coactivator/pterin dehydratase"/>
    <property type="match status" value="1"/>
</dbReference>
<dbReference type="HAMAP" id="MF_00434">
    <property type="entry name" value="Pterin_4_alpha"/>
    <property type="match status" value="1"/>
</dbReference>
<dbReference type="InterPro" id="IPR036428">
    <property type="entry name" value="PCD_sf"/>
</dbReference>
<dbReference type="InterPro" id="IPR001533">
    <property type="entry name" value="Pterin_deHydtase"/>
</dbReference>
<dbReference type="NCBIfam" id="NF002019">
    <property type="entry name" value="PRK00823.1-4"/>
    <property type="match status" value="1"/>
</dbReference>
<dbReference type="PANTHER" id="PTHR12599">
    <property type="entry name" value="PTERIN-4-ALPHA-CARBINOLAMINE DEHYDRATASE"/>
    <property type="match status" value="1"/>
</dbReference>
<dbReference type="PANTHER" id="PTHR12599:SF0">
    <property type="entry name" value="PTERIN-4-ALPHA-CARBINOLAMINE DEHYDRATASE"/>
    <property type="match status" value="1"/>
</dbReference>
<dbReference type="Pfam" id="PF01329">
    <property type="entry name" value="Pterin_4a"/>
    <property type="match status" value="1"/>
</dbReference>
<dbReference type="SUPFAM" id="SSF55248">
    <property type="entry name" value="PCD-like"/>
    <property type="match status" value="1"/>
</dbReference>
<sequence>MTNVCDLTDRKCKPCEGGVPPLEMEEAEKLLKQLEQGWQLADNKISRTFSFKNYYQTMAFVNAIAWVSHREDHHPDMMVGYDWCRVEYMTHAIGGLSENDFICAAKVDMLFKS</sequence>
<proteinExistence type="inferred from homology"/>
<protein>
    <recommendedName>
        <fullName evidence="1">Putative pterin-4-alpha-carbinolamine dehydratase</fullName>
        <shortName evidence="1">PHS</shortName>
        <ecNumber evidence="1">4.2.1.96</ecNumber>
    </recommendedName>
    <alternativeName>
        <fullName evidence="1">4-alpha-hydroxy-tetrahydropterin dehydratase</fullName>
    </alternativeName>
    <alternativeName>
        <fullName evidence="1">Pterin carbinolamine dehydratase</fullName>
        <shortName evidence="1">PCD</shortName>
    </alternativeName>
</protein>
<comment type="catalytic activity">
    <reaction evidence="1">
        <text>(4aS,6R)-4a-hydroxy-L-erythro-5,6,7,8-tetrahydrobiopterin = (6R)-L-erythro-6,7-dihydrobiopterin + H2O</text>
        <dbReference type="Rhea" id="RHEA:11920"/>
        <dbReference type="ChEBI" id="CHEBI:15377"/>
        <dbReference type="ChEBI" id="CHEBI:15642"/>
        <dbReference type="ChEBI" id="CHEBI:43120"/>
        <dbReference type="EC" id="4.2.1.96"/>
    </reaction>
</comment>
<comment type="similarity">
    <text evidence="1">Belongs to the pterin-4-alpha-carbinolamine dehydratase family.</text>
</comment>
<accession>Q82Y13</accession>
<organism>
    <name type="scientific">Nitrosomonas europaea (strain ATCC 19718 / CIP 103999 / KCTC 2705 / NBRC 14298)</name>
    <dbReference type="NCBI Taxonomy" id="228410"/>
    <lineage>
        <taxon>Bacteria</taxon>
        <taxon>Pseudomonadati</taxon>
        <taxon>Pseudomonadota</taxon>
        <taxon>Betaproteobacteria</taxon>
        <taxon>Nitrosomonadales</taxon>
        <taxon>Nitrosomonadaceae</taxon>
        <taxon>Nitrosomonas</taxon>
    </lineage>
</organism>
<gene>
    <name type="ordered locus">NE0077</name>
</gene>
<reference key="1">
    <citation type="journal article" date="2003" name="J. Bacteriol.">
        <title>Complete genome sequence of the ammonia-oxidizing bacterium and obligate chemolithoautotroph Nitrosomonas europaea.</title>
        <authorList>
            <person name="Chain P."/>
            <person name="Lamerdin J.E."/>
            <person name="Larimer F.W."/>
            <person name="Regala W."/>
            <person name="Lao V."/>
            <person name="Land M.L."/>
            <person name="Hauser L."/>
            <person name="Hooper A.B."/>
            <person name="Klotz M.G."/>
            <person name="Norton J."/>
            <person name="Sayavedra-Soto L.A."/>
            <person name="Arciero D.M."/>
            <person name="Hommes N.G."/>
            <person name="Whittaker M.M."/>
            <person name="Arp D.J."/>
        </authorList>
    </citation>
    <scope>NUCLEOTIDE SEQUENCE [LARGE SCALE GENOMIC DNA]</scope>
    <source>
        <strain>ATCC 19718 / CIP 103999 / KCTC 2705 / NBRC 14298</strain>
    </source>
</reference>
<keyword id="KW-0456">Lyase</keyword>
<keyword id="KW-1185">Reference proteome</keyword>
<name>PHS_NITEU</name>
<feature type="chain" id="PRO_0000063087" description="Putative pterin-4-alpha-carbinolamine dehydratase">
    <location>
        <begin position="1"/>
        <end position="113"/>
    </location>
</feature>
<evidence type="ECO:0000255" key="1">
    <source>
        <dbReference type="HAMAP-Rule" id="MF_00434"/>
    </source>
</evidence>